<name>RL22_VIBC1</name>
<gene>
    <name evidence="1" type="primary">rplV</name>
    <name type="ordered locus">VIBHAR_00735</name>
</gene>
<sequence>MEAIAKHNFARISPQKARLVADLIRGKSVDQALEILTFSNKKAAVLVKKVLESAIANAEHNEGADIDDLNVAKIFVDEGPTMKRIMPRAKGRADRILKRSSHITVVVADR</sequence>
<organism>
    <name type="scientific">Vibrio campbellii (strain ATCC BAA-1116)</name>
    <dbReference type="NCBI Taxonomy" id="2902295"/>
    <lineage>
        <taxon>Bacteria</taxon>
        <taxon>Pseudomonadati</taxon>
        <taxon>Pseudomonadota</taxon>
        <taxon>Gammaproteobacteria</taxon>
        <taxon>Vibrionales</taxon>
        <taxon>Vibrionaceae</taxon>
        <taxon>Vibrio</taxon>
    </lineage>
</organism>
<feature type="chain" id="PRO_0000354535" description="Large ribosomal subunit protein uL22">
    <location>
        <begin position="1"/>
        <end position="110"/>
    </location>
</feature>
<protein>
    <recommendedName>
        <fullName evidence="1">Large ribosomal subunit protein uL22</fullName>
    </recommendedName>
    <alternativeName>
        <fullName evidence="2">50S ribosomal protein L22</fullName>
    </alternativeName>
</protein>
<accession>A7MWI8</accession>
<keyword id="KW-0687">Ribonucleoprotein</keyword>
<keyword id="KW-0689">Ribosomal protein</keyword>
<keyword id="KW-0694">RNA-binding</keyword>
<keyword id="KW-0699">rRNA-binding</keyword>
<comment type="function">
    <text evidence="1">This protein binds specifically to 23S rRNA; its binding is stimulated by other ribosomal proteins, e.g. L4, L17, and L20. It is important during the early stages of 50S assembly. It makes multiple contacts with different domains of the 23S rRNA in the assembled 50S subunit and ribosome (By similarity).</text>
</comment>
<comment type="function">
    <text evidence="1">The globular domain of the protein is located near the polypeptide exit tunnel on the outside of the subunit, while an extended beta-hairpin is found that lines the wall of the exit tunnel in the center of the 70S ribosome.</text>
</comment>
<comment type="subunit">
    <text evidence="1">Part of the 50S ribosomal subunit.</text>
</comment>
<comment type="similarity">
    <text evidence="1">Belongs to the universal ribosomal protein uL22 family.</text>
</comment>
<proteinExistence type="inferred from homology"/>
<reference key="1">
    <citation type="submission" date="2007-08" db="EMBL/GenBank/DDBJ databases">
        <authorList>
            <consortium name="The Vibrio harveyi Genome Sequencing Project"/>
            <person name="Bassler B."/>
            <person name="Clifton S.W."/>
            <person name="Fulton L."/>
            <person name="Delehaunty K."/>
            <person name="Fronick C."/>
            <person name="Harrison M."/>
            <person name="Markivic C."/>
            <person name="Fulton R."/>
            <person name="Tin-Wollam A.-M."/>
            <person name="Shah N."/>
            <person name="Pepin K."/>
            <person name="Nash W."/>
            <person name="Thiruvilangam P."/>
            <person name="Bhonagiri V."/>
            <person name="Waters C."/>
            <person name="Tu K.C."/>
            <person name="Irgon J."/>
            <person name="Wilson R.K."/>
        </authorList>
    </citation>
    <scope>NUCLEOTIDE SEQUENCE [LARGE SCALE GENOMIC DNA]</scope>
    <source>
        <strain>ATCC BAA-1116 / BB120</strain>
    </source>
</reference>
<evidence type="ECO:0000255" key="1">
    <source>
        <dbReference type="HAMAP-Rule" id="MF_01331"/>
    </source>
</evidence>
<evidence type="ECO:0000305" key="2"/>
<dbReference type="EMBL" id="CP000789">
    <property type="protein sequence ID" value="ABU69736.1"/>
    <property type="molecule type" value="Genomic_DNA"/>
</dbReference>
<dbReference type="RefSeq" id="WP_005528535.1">
    <property type="nucleotide sequence ID" value="NC_022269.1"/>
</dbReference>
<dbReference type="SMR" id="A7MWI8"/>
<dbReference type="GeneID" id="95678952"/>
<dbReference type="KEGG" id="vha:VIBHAR_00735"/>
<dbReference type="PATRIC" id="fig|338187.25.peg.1879"/>
<dbReference type="Proteomes" id="UP000008152">
    <property type="component" value="Chromosome I"/>
</dbReference>
<dbReference type="GO" id="GO:0022625">
    <property type="term" value="C:cytosolic large ribosomal subunit"/>
    <property type="evidence" value="ECO:0007669"/>
    <property type="project" value="TreeGrafter"/>
</dbReference>
<dbReference type="GO" id="GO:0019843">
    <property type="term" value="F:rRNA binding"/>
    <property type="evidence" value="ECO:0007669"/>
    <property type="project" value="UniProtKB-UniRule"/>
</dbReference>
<dbReference type="GO" id="GO:0003735">
    <property type="term" value="F:structural constituent of ribosome"/>
    <property type="evidence" value="ECO:0007669"/>
    <property type="project" value="InterPro"/>
</dbReference>
<dbReference type="GO" id="GO:0006412">
    <property type="term" value="P:translation"/>
    <property type="evidence" value="ECO:0007669"/>
    <property type="project" value="UniProtKB-UniRule"/>
</dbReference>
<dbReference type="CDD" id="cd00336">
    <property type="entry name" value="Ribosomal_L22"/>
    <property type="match status" value="1"/>
</dbReference>
<dbReference type="FunFam" id="3.90.470.10:FF:000001">
    <property type="entry name" value="50S ribosomal protein L22"/>
    <property type="match status" value="1"/>
</dbReference>
<dbReference type="Gene3D" id="3.90.470.10">
    <property type="entry name" value="Ribosomal protein L22/L17"/>
    <property type="match status" value="1"/>
</dbReference>
<dbReference type="HAMAP" id="MF_01331_B">
    <property type="entry name" value="Ribosomal_uL22_B"/>
    <property type="match status" value="1"/>
</dbReference>
<dbReference type="InterPro" id="IPR001063">
    <property type="entry name" value="Ribosomal_uL22"/>
</dbReference>
<dbReference type="InterPro" id="IPR005727">
    <property type="entry name" value="Ribosomal_uL22_bac/chlpt-type"/>
</dbReference>
<dbReference type="InterPro" id="IPR047867">
    <property type="entry name" value="Ribosomal_uL22_bac/org-type"/>
</dbReference>
<dbReference type="InterPro" id="IPR018260">
    <property type="entry name" value="Ribosomal_uL22_CS"/>
</dbReference>
<dbReference type="InterPro" id="IPR036394">
    <property type="entry name" value="Ribosomal_uL22_sf"/>
</dbReference>
<dbReference type="NCBIfam" id="TIGR01044">
    <property type="entry name" value="rplV_bact"/>
    <property type="match status" value="1"/>
</dbReference>
<dbReference type="PANTHER" id="PTHR13501">
    <property type="entry name" value="CHLOROPLAST 50S RIBOSOMAL PROTEIN L22-RELATED"/>
    <property type="match status" value="1"/>
</dbReference>
<dbReference type="PANTHER" id="PTHR13501:SF8">
    <property type="entry name" value="LARGE RIBOSOMAL SUBUNIT PROTEIN UL22M"/>
    <property type="match status" value="1"/>
</dbReference>
<dbReference type="Pfam" id="PF00237">
    <property type="entry name" value="Ribosomal_L22"/>
    <property type="match status" value="1"/>
</dbReference>
<dbReference type="SUPFAM" id="SSF54843">
    <property type="entry name" value="Ribosomal protein L22"/>
    <property type="match status" value="1"/>
</dbReference>
<dbReference type="PROSITE" id="PS00464">
    <property type="entry name" value="RIBOSOMAL_L22"/>
    <property type="match status" value="1"/>
</dbReference>